<comment type="function">
    <text evidence="1">Catalyzes the attachment of serine to tRNA(Ser). Is also able to aminoacylate tRNA(Sec) with serine, to form the misacylated tRNA L-seryl-tRNA(Sec), which will be further converted into selenocysteinyl-tRNA(Sec).</text>
</comment>
<comment type="catalytic activity">
    <reaction evidence="1">
        <text>tRNA(Ser) + L-serine + ATP = L-seryl-tRNA(Ser) + AMP + diphosphate + H(+)</text>
        <dbReference type="Rhea" id="RHEA:12292"/>
        <dbReference type="Rhea" id="RHEA-COMP:9669"/>
        <dbReference type="Rhea" id="RHEA-COMP:9703"/>
        <dbReference type="ChEBI" id="CHEBI:15378"/>
        <dbReference type="ChEBI" id="CHEBI:30616"/>
        <dbReference type="ChEBI" id="CHEBI:33019"/>
        <dbReference type="ChEBI" id="CHEBI:33384"/>
        <dbReference type="ChEBI" id="CHEBI:78442"/>
        <dbReference type="ChEBI" id="CHEBI:78533"/>
        <dbReference type="ChEBI" id="CHEBI:456215"/>
        <dbReference type="EC" id="6.1.1.11"/>
    </reaction>
</comment>
<comment type="catalytic activity">
    <reaction evidence="1">
        <text>tRNA(Sec) + L-serine + ATP = L-seryl-tRNA(Sec) + AMP + diphosphate + H(+)</text>
        <dbReference type="Rhea" id="RHEA:42580"/>
        <dbReference type="Rhea" id="RHEA-COMP:9742"/>
        <dbReference type="Rhea" id="RHEA-COMP:10128"/>
        <dbReference type="ChEBI" id="CHEBI:15378"/>
        <dbReference type="ChEBI" id="CHEBI:30616"/>
        <dbReference type="ChEBI" id="CHEBI:33019"/>
        <dbReference type="ChEBI" id="CHEBI:33384"/>
        <dbReference type="ChEBI" id="CHEBI:78442"/>
        <dbReference type="ChEBI" id="CHEBI:78533"/>
        <dbReference type="ChEBI" id="CHEBI:456215"/>
        <dbReference type="EC" id="6.1.1.11"/>
    </reaction>
</comment>
<comment type="pathway">
    <text evidence="1">Aminoacyl-tRNA biosynthesis; selenocysteinyl-tRNA(Sec) biosynthesis; L-seryl-tRNA(Sec) from L-serine and tRNA(Sec): step 1/1.</text>
</comment>
<comment type="subunit">
    <text evidence="1">Homodimer. The tRNA molecule binds across the dimer.</text>
</comment>
<comment type="subcellular location">
    <subcellularLocation>
        <location evidence="1">Cytoplasm</location>
    </subcellularLocation>
</comment>
<comment type="domain">
    <text evidence="1">Consists of two distinct domains, a catalytic core and a N-terminal extension that is involved in tRNA binding.</text>
</comment>
<comment type="similarity">
    <text evidence="1">Belongs to the class-II aminoacyl-tRNA synthetase family. Type-1 seryl-tRNA synthetase subfamily.</text>
</comment>
<dbReference type="EC" id="6.1.1.11" evidence="1"/>
<dbReference type="EMBL" id="AM902716">
    <property type="protein sequence ID" value="CAP41926.1"/>
    <property type="molecule type" value="Genomic_DNA"/>
</dbReference>
<dbReference type="SMR" id="A9IGG4"/>
<dbReference type="STRING" id="94624.Bpet1587"/>
<dbReference type="KEGG" id="bpt:Bpet1587"/>
<dbReference type="eggNOG" id="COG0172">
    <property type="taxonomic scope" value="Bacteria"/>
</dbReference>
<dbReference type="UniPathway" id="UPA00906">
    <property type="reaction ID" value="UER00895"/>
</dbReference>
<dbReference type="Proteomes" id="UP000001225">
    <property type="component" value="Chromosome"/>
</dbReference>
<dbReference type="GO" id="GO:0005737">
    <property type="term" value="C:cytoplasm"/>
    <property type="evidence" value="ECO:0007669"/>
    <property type="project" value="UniProtKB-SubCell"/>
</dbReference>
<dbReference type="GO" id="GO:0005524">
    <property type="term" value="F:ATP binding"/>
    <property type="evidence" value="ECO:0007669"/>
    <property type="project" value="UniProtKB-UniRule"/>
</dbReference>
<dbReference type="GO" id="GO:0004828">
    <property type="term" value="F:serine-tRNA ligase activity"/>
    <property type="evidence" value="ECO:0007669"/>
    <property type="project" value="UniProtKB-UniRule"/>
</dbReference>
<dbReference type="GO" id="GO:0016260">
    <property type="term" value="P:selenocysteine biosynthetic process"/>
    <property type="evidence" value="ECO:0007669"/>
    <property type="project" value="UniProtKB-UniRule"/>
</dbReference>
<dbReference type="GO" id="GO:0006434">
    <property type="term" value="P:seryl-tRNA aminoacylation"/>
    <property type="evidence" value="ECO:0007669"/>
    <property type="project" value="UniProtKB-UniRule"/>
</dbReference>
<dbReference type="CDD" id="cd00770">
    <property type="entry name" value="SerRS_core"/>
    <property type="match status" value="1"/>
</dbReference>
<dbReference type="Gene3D" id="3.30.930.10">
    <property type="entry name" value="Bira Bifunctional Protein, Domain 2"/>
    <property type="match status" value="1"/>
</dbReference>
<dbReference type="Gene3D" id="1.10.287.40">
    <property type="entry name" value="Serine-tRNA synthetase, tRNA binding domain"/>
    <property type="match status" value="1"/>
</dbReference>
<dbReference type="HAMAP" id="MF_00176">
    <property type="entry name" value="Ser_tRNA_synth_type1"/>
    <property type="match status" value="1"/>
</dbReference>
<dbReference type="InterPro" id="IPR002314">
    <property type="entry name" value="aa-tRNA-synt_IIb"/>
</dbReference>
<dbReference type="InterPro" id="IPR006195">
    <property type="entry name" value="aa-tRNA-synth_II"/>
</dbReference>
<dbReference type="InterPro" id="IPR045864">
    <property type="entry name" value="aa-tRNA-synth_II/BPL/LPL"/>
</dbReference>
<dbReference type="InterPro" id="IPR002317">
    <property type="entry name" value="Ser-tRNA-ligase_type_1"/>
</dbReference>
<dbReference type="InterPro" id="IPR015866">
    <property type="entry name" value="Ser-tRNA-synth_1_N"/>
</dbReference>
<dbReference type="InterPro" id="IPR042103">
    <property type="entry name" value="SerRS_1_N_sf"/>
</dbReference>
<dbReference type="InterPro" id="IPR033729">
    <property type="entry name" value="SerRS_core"/>
</dbReference>
<dbReference type="InterPro" id="IPR010978">
    <property type="entry name" value="tRNA-bd_arm"/>
</dbReference>
<dbReference type="NCBIfam" id="TIGR00414">
    <property type="entry name" value="serS"/>
    <property type="match status" value="1"/>
</dbReference>
<dbReference type="PANTHER" id="PTHR43697:SF1">
    <property type="entry name" value="SERINE--TRNA LIGASE"/>
    <property type="match status" value="1"/>
</dbReference>
<dbReference type="PANTHER" id="PTHR43697">
    <property type="entry name" value="SERYL-TRNA SYNTHETASE"/>
    <property type="match status" value="1"/>
</dbReference>
<dbReference type="Pfam" id="PF02403">
    <property type="entry name" value="Seryl_tRNA_N"/>
    <property type="match status" value="1"/>
</dbReference>
<dbReference type="Pfam" id="PF00587">
    <property type="entry name" value="tRNA-synt_2b"/>
    <property type="match status" value="1"/>
</dbReference>
<dbReference type="PIRSF" id="PIRSF001529">
    <property type="entry name" value="Ser-tRNA-synth_IIa"/>
    <property type="match status" value="1"/>
</dbReference>
<dbReference type="PRINTS" id="PR00981">
    <property type="entry name" value="TRNASYNTHSER"/>
</dbReference>
<dbReference type="SUPFAM" id="SSF55681">
    <property type="entry name" value="Class II aaRS and biotin synthetases"/>
    <property type="match status" value="1"/>
</dbReference>
<dbReference type="SUPFAM" id="SSF46589">
    <property type="entry name" value="tRNA-binding arm"/>
    <property type="match status" value="1"/>
</dbReference>
<dbReference type="PROSITE" id="PS50862">
    <property type="entry name" value="AA_TRNA_LIGASE_II"/>
    <property type="match status" value="1"/>
</dbReference>
<reference key="1">
    <citation type="journal article" date="2008" name="BMC Genomics">
        <title>The missing link: Bordetella petrii is endowed with both the metabolic versatility of environmental bacteria and virulence traits of pathogenic Bordetellae.</title>
        <authorList>
            <person name="Gross R."/>
            <person name="Guzman C.A."/>
            <person name="Sebaihia M."/>
            <person name="Martin dos Santos V.A.P."/>
            <person name="Pieper D.H."/>
            <person name="Koebnik R."/>
            <person name="Lechner M."/>
            <person name="Bartels D."/>
            <person name="Buhrmester J."/>
            <person name="Choudhuri J.V."/>
            <person name="Ebensen T."/>
            <person name="Gaigalat L."/>
            <person name="Herrmann S."/>
            <person name="Khachane A.N."/>
            <person name="Larisch C."/>
            <person name="Link S."/>
            <person name="Linke B."/>
            <person name="Meyer F."/>
            <person name="Mormann S."/>
            <person name="Nakunst D."/>
            <person name="Rueckert C."/>
            <person name="Schneiker-Bekel S."/>
            <person name="Schulze K."/>
            <person name="Voerholter F.-J."/>
            <person name="Yevsa T."/>
            <person name="Engle J.T."/>
            <person name="Goldman W.E."/>
            <person name="Puehler A."/>
            <person name="Goebel U.B."/>
            <person name="Goesmann A."/>
            <person name="Bloecker H."/>
            <person name="Kaiser O."/>
            <person name="Martinez-Arias R."/>
        </authorList>
    </citation>
    <scope>NUCLEOTIDE SEQUENCE [LARGE SCALE GENOMIC DNA]</scope>
    <source>
        <strain>ATCC BAA-461 / DSM 12804 / CCUG 43448</strain>
    </source>
</reference>
<protein>
    <recommendedName>
        <fullName evidence="1">Serine--tRNA ligase</fullName>
        <ecNumber evidence="1">6.1.1.11</ecNumber>
    </recommendedName>
    <alternativeName>
        <fullName evidence="1">Seryl-tRNA synthetase</fullName>
        <shortName evidence="1">SerRS</shortName>
    </alternativeName>
    <alternativeName>
        <fullName evidence="1">Seryl-tRNA(Ser/Sec) synthetase</fullName>
    </alternativeName>
</protein>
<gene>
    <name evidence="1" type="primary">serS</name>
    <name type="ordered locus">Bpet1587</name>
</gene>
<organism>
    <name type="scientific">Bordetella petrii (strain ATCC BAA-461 / DSM 12804 / CCUG 43448)</name>
    <dbReference type="NCBI Taxonomy" id="340100"/>
    <lineage>
        <taxon>Bacteria</taxon>
        <taxon>Pseudomonadati</taxon>
        <taxon>Pseudomonadota</taxon>
        <taxon>Betaproteobacteria</taxon>
        <taxon>Burkholderiales</taxon>
        <taxon>Alcaligenaceae</taxon>
        <taxon>Bordetella</taxon>
    </lineage>
</organism>
<keyword id="KW-0030">Aminoacyl-tRNA synthetase</keyword>
<keyword id="KW-0067">ATP-binding</keyword>
<keyword id="KW-0963">Cytoplasm</keyword>
<keyword id="KW-0436">Ligase</keyword>
<keyword id="KW-0547">Nucleotide-binding</keyword>
<keyword id="KW-0648">Protein biosynthesis</keyword>
<evidence type="ECO:0000255" key="1">
    <source>
        <dbReference type="HAMAP-Rule" id="MF_00176"/>
    </source>
</evidence>
<sequence length="448" mass="49257">MLDPILLRKDLQTVVSRLKTRGVDFDTQRFNELEARRKAVQTETESLQARRNALAKQIGQLKAQGQDASAVLAESQAIPARLKQLEDDLAVVQQSLGDLLMAVPNLPHESVPAGASADDNVEVRRWLPGPPAADGNPPPLPFEPKDHVALGEPLGLDFDTAAKLSGARFSFMRGPVARLHRALAQFMLDLQTGQHGYTECYTPYIVNSSTLYGTGQLPKFKDDMFFVTKGGEDDDPKVDERGNALAREDQYLISTSEITLTSVARDSIIPAANLPLRLTAHTPCFRSEAGSGGRDTRGMIRQHQFDKVEMVQIVHPETSYQVLEDMVGHAEHVLQLLELPYRVVLLCTGDMGFGSAKTYDLEVWLPAQNTWREISSVSNCETFQARRMQARFRAAQGKPDYVHTLNGSGLAVGRALVAVLENHQQADGSIAVPKVLQPYMGGLTVLQP</sequence>
<name>SYS_BORPD</name>
<proteinExistence type="inferred from homology"/>
<accession>A9IGG4</accession>
<feature type="chain" id="PRO_1000098035" description="Serine--tRNA ligase">
    <location>
        <begin position="1"/>
        <end position="448"/>
    </location>
</feature>
<feature type="binding site" evidence="1">
    <location>
        <begin position="255"/>
        <end position="257"/>
    </location>
    <ligand>
        <name>L-serine</name>
        <dbReference type="ChEBI" id="CHEBI:33384"/>
    </ligand>
</feature>
<feature type="binding site" evidence="1">
    <location>
        <begin position="286"/>
        <end position="288"/>
    </location>
    <ligand>
        <name>ATP</name>
        <dbReference type="ChEBI" id="CHEBI:30616"/>
    </ligand>
</feature>
<feature type="binding site" evidence="1">
    <location>
        <position position="309"/>
    </location>
    <ligand>
        <name>L-serine</name>
        <dbReference type="ChEBI" id="CHEBI:33384"/>
    </ligand>
</feature>
<feature type="binding site" evidence="1">
    <location>
        <begin position="373"/>
        <end position="376"/>
    </location>
    <ligand>
        <name>ATP</name>
        <dbReference type="ChEBI" id="CHEBI:30616"/>
    </ligand>
</feature>
<feature type="binding site" evidence="1">
    <location>
        <position position="408"/>
    </location>
    <ligand>
        <name>L-serine</name>
        <dbReference type="ChEBI" id="CHEBI:33384"/>
    </ligand>
</feature>